<accession>O25825</accession>
<evidence type="ECO:0000255" key="1">
    <source>
        <dbReference type="PROSITE-ProRule" id="PRU00433"/>
    </source>
</evidence>
<evidence type="ECO:0000269" key="2">
    <source>
    </source>
</evidence>
<evidence type="ECO:0000305" key="3"/>
<proteinExistence type="evidence at protein level"/>
<feature type="signal peptide" evidence="2">
    <location>
        <begin position="1"/>
        <end position="19"/>
    </location>
</feature>
<feature type="chain" id="PRO_0000006537" description="Cytochrome c-553">
    <location>
        <begin position="20"/>
        <end position="96"/>
    </location>
</feature>
<feature type="binding site" description="covalent">
    <location>
        <position position="29"/>
    </location>
    <ligand>
        <name>heme c</name>
        <dbReference type="ChEBI" id="CHEBI:61717"/>
    </ligand>
</feature>
<feature type="binding site" description="covalent">
    <location>
        <position position="32"/>
    </location>
    <ligand>
        <name>heme c</name>
        <dbReference type="ChEBI" id="CHEBI:61717"/>
    </ligand>
</feature>
<feature type="binding site" description="axial binding residue" evidence="1">
    <location>
        <position position="33"/>
    </location>
    <ligand>
        <name>heme c</name>
        <dbReference type="ChEBI" id="CHEBI:61717"/>
    </ligand>
    <ligandPart>
        <name>Fe</name>
        <dbReference type="ChEBI" id="CHEBI:18248"/>
    </ligandPart>
</feature>
<feature type="binding site" description="axial binding residue" evidence="1">
    <location>
        <position position="73"/>
    </location>
    <ligand>
        <name>heme c</name>
        <dbReference type="ChEBI" id="CHEBI:61717"/>
    </ligand>
    <ligandPart>
        <name>Fe</name>
        <dbReference type="ChEBI" id="CHEBI:18248"/>
    </ligandPart>
</feature>
<name>CY553_HELPY</name>
<comment type="function">
    <text>Natural electron acceptor for a formate dehydrogenase.</text>
</comment>
<comment type="subcellular location">
    <subcellularLocation>
        <location>Periplasm</location>
    </subcellularLocation>
</comment>
<comment type="PTM">
    <text>Binds 1 heme c group covalently per subunit.</text>
</comment>
<comment type="similarity">
    <text evidence="3">Belongs to the cytochrome c family.</text>
</comment>
<protein>
    <recommendedName>
        <fullName>Cytochrome c-553</fullName>
    </recommendedName>
    <alternativeName>
        <fullName>Cytochrome c553</fullName>
    </alternativeName>
</protein>
<keyword id="KW-0903">Direct protein sequencing</keyword>
<keyword id="KW-0249">Electron transport</keyword>
<keyword id="KW-0349">Heme</keyword>
<keyword id="KW-0408">Iron</keyword>
<keyword id="KW-0479">Metal-binding</keyword>
<keyword id="KW-0574">Periplasm</keyword>
<keyword id="KW-1185">Reference proteome</keyword>
<keyword id="KW-0732">Signal</keyword>
<keyword id="KW-0813">Transport</keyword>
<dbReference type="EMBL" id="AE000511">
    <property type="protein sequence ID" value="AAD08272.1"/>
    <property type="molecule type" value="Genomic_DNA"/>
</dbReference>
<dbReference type="PIR" id="C64673">
    <property type="entry name" value="C64673"/>
</dbReference>
<dbReference type="RefSeq" id="NP_208019.1">
    <property type="nucleotide sequence ID" value="NC_000915.1"/>
</dbReference>
<dbReference type="RefSeq" id="WP_000755879.1">
    <property type="nucleotide sequence ID" value="NC_018939.1"/>
</dbReference>
<dbReference type="SMR" id="O25825"/>
<dbReference type="STRING" id="85962.HP_1227"/>
<dbReference type="PaxDb" id="85962-C694_06335"/>
<dbReference type="EnsemblBacteria" id="AAD08272">
    <property type="protein sequence ID" value="AAD08272"/>
    <property type="gene ID" value="HP_1227"/>
</dbReference>
<dbReference type="KEGG" id="heo:C694_06335"/>
<dbReference type="KEGG" id="hpy:HP_1227"/>
<dbReference type="PATRIC" id="fig|85962.47.peg.1315"/>
<dbReference type="eggNOG" id="COG2863">
    <property type="taxonomic scope" value="Bacteria"/>
</dbReference>
<dbReference type="InParanoid" id="O25825"/>
<dbReference type="OrthoDB" id="5340148at2"/>
<dbReference type="PhylomeDB" id="O25825"/>
<dbReference type="Proteomes" id="UP000000429">
    <property type="component" value="Chromosome"/>
</dbReference>
<dbReference type="GO" id="GO:0042597">
    <property type="term" value="C:periplasmic space"/>
    <property type="evidence" value="ECO:0007669"/>
    <property type="project" value="UniProtKB-SubCell"/>
</dbReference>
<dbReference type="GO" id="GO:0009055">
    <property type="term" value="F:electron transfer activity"/>
    <property type="evidence" value="ECO:0007669"/>
    <property type="project" value="InterPro"/>
</dbReference>
<dbReference type="GO" id="GO:0020037">
    <property type="term" value="F:heme binding"/>
    <property type="evidence" value="ECO:0007669"/>
    <property type="project" value="InterPro"/>
</dbReference>
<dbReference type="GO" id="GO:0005506">
    <property type="term" value="F:iron ion binding"/>
    <property type="evidence" value="ECO:0007669"/>
    <property type="project" value="InterPro"/>
</dbReference>
<dbReference type="Gene3D" id="1.10.760.10">
    <property type="entry name" value="Cytochrome c-like domain"/>
    <property type="match status" value="1"/>
</dbReference>
<dbReference type="InterPro" id="IPR009056">
    <property type="entry name" value="Cyt_c-like_dom"/>
</dbReference>
<dbReference type="InterPro" id="IPR036909">
    <property type="entry name" value="Cyt_c-like_dom_sf"/>
</dbReference>
<dbReference type="InterPro" id="IPR008168">
    <property type="entry name" value="Cyt_C_IC"/>
</dbReference>
<dbReference type="InterPro" id="IPR050597">
    <property type="entry name" value="Cytochrome_c_Oxidase_Subunit"/>
</dbReference>
<dbReference type="PANTHER" id="PTHR33751">
    <property type="entry name" value="CBB3-TYPE CYTOCHROME C OXIDASE SUBUNIT FIXP"/>
    <property type="match status" value="1"/>
</dbReference>
<dbReference type="PANTHER" id="PTHR33751:SF9">
    <property type="entry name" value="CYTOCHROME C4"/>
    <property type="match status" value="1"/>
</dbReference>
<dbReference type="Pfam" id="PF13442">
    <property type="entry name" value="Cytochrome_CBB3"/>
    <property type="match status" value="1"/>
</dbReference>
<dbReference type="PRINTS" id="PR00605">
    <property type="entry name" value="CYTCHROMECIC"/>
</dbReference>
<dbReference type="SUPFAM" id="SSF46626">
    <property type="entry name" value="Cytochrome c"/>
    <property type="match status" value="1"/>
</dbReference>
<dbReference type="PROSITE" id="PS51007">
    <property type="entry name" value="CYTC"/>
    <property type="match status" value="1"/>
</dbReference>
<sequence length="96" mass="10346">MKKVIMALGVLAFANALMATDVKALAKSCAACHGVKFEKKALGKSKIVNMMSEAEIEKDLMDFKSGANKNPIMSAQAKKLSDEDIKALAKYIPTLK</sequence>
<organism>
    <name type="scientific">Helicobacter pylori (strain ATCC 700392 / 26695)</name>
    <name type="common">Campylobacter pylori</name>
    <dbReference type="NCBI Taxonomy" id="85962"/>
    <lineage>
        <taxon>Bacteria</taxon>
        <taxon>Pseudomonadati</taxon>
        <taxon>Campylobacterota</taxon>
        <taxon>Epsilonproteobacteria</taxon>
        <taxon>Campylobacterales</taxon>
        <taxon>Helicobacteraceae</taxon>
        <taxon>Helicobacter</taxon>
    </lineage>
</organism>
<gene>
    <name type="ordered locus">HP_1227</name>
</gene>
<reference key="1">
    <citation type="journal article" date="1997" name="Nature">
        <title>The complete genome sequence of the gastric pathogen Helicobacter pylori.</title>
        <authorList>
            <person name="Tomb J.-F."/>
            <person name="White O."/>
            <person name="Kerlavage A.R."/>
            <person name="Clayton R.A."/>
            <person name="Sutton G.G."/>
            <person name="Fleischmann R.D."/>
            <person name="Ketchum K.A."/>
            <person name="Klenk H.-P."/>
            <person name="Gill S.R."/>
            <person name="Dougherty B.A."/>
            <person name="Nelson K.E."/>
            <person name="Quackenbush J."/>
            <person name="Zhou L."/>
            <person name="Kirkness E.F."/>
            <person name="Peterson S.N."/>
            <person name="Loftus B.J."/>
            <person name="Richardson D.L."/>
            <person name="Dodson R.J."/>
            <person name="Khalak H.G."/>
            <person name="Glodek A."/>
            <person name="McKenney K."/>
            <person name="FitzGerald L.M."/>
            <person name="Lee N."/>
            <person name="Adams M.D."/>
            <person name="Hickey E.K."/>
            <person name="Berg D.E."/>
            <person name="Gocayne J.D."/>
            <person name="Utterback T.R."/>
            <person name="Peterson J.D."/>
            <person name="Kelley J.M."/>
            <person name="Cotton M.D."/>
            <person name="Weidman J.F."/>
            <person name="Fujii C."/>
            <person name="Bowman C."/>
            <person name="Watthey L."/>
            <person name="Wallin E."/>
            <person name="Hayes W.S."/>
            <person name="Borodovsky M."/>
            <person name="Karp P.D."/>
            <person name="Smith H.O."/>
            <person name="Fraser C.M."/>
            <person name="Venter J.C."/>
        </authorList>
    </citation>
    <scope>NUCLEOTIDE SEQUENCE [LARGE SCALE GENOMIC DNA]</scope>
    <source>
        <strain>ATCC 700392 / 26695</strain>
    </source>
</reference>
<reference key="2">
    <citation type="journal article" date="2000" name="J. Biochem.">
        <title>Purification and characterization of cytochrome c-553 from Helicobacter pylori.</title>
        <authorList>
            <person name="Koyanagi S."/>
            <person name="Nagata K."/>
            <person name="Tamura T."/>
            <person name="Tsukita S."/>
            <person name="Sone N."/>
        </authorList>
    </citation>
    <scope>PROTEIN SEQUENCE OF 20-28</scope>
    <scope>CHARACTERIZATION</scope>
</reference>